<name>LAR4_DROME</name>
<gene>
    <name evidence="7 10" type="primary">Larp4B</name>
    <name evidence="7" type="ORF">CG11505</name>
</gene>
<feature type="chain" id="PRO_0000372865" description="La-related protein Larp4B">
    <location>
        <begin position="1"/>
        <end position="1531"/>
    </location>
</feature>
<feature type="domain" description="HTH La-type RNA-binding" evidence="2">
    <location>
        <begin position="262"/>
        <end position="351"/>
    </location>
</feature>
<feature type="domain" description="RRM" evidence="1">
    <location>
        <begin position="348"/>
        <end position="423"/>
    </location>
</feature>
<feature type="region of interest" description="Disordered" evidence="3">
    <location>
        <begin position="112"/>
        <end position="148"/>
    </location>
</feature>
<feature type="region of interest" description="Disordered" evidence="3">
    <location>
        <begin position="239"/>
        <end position="263"/>
    </location>
</feature>
<feature type="region of interest" description="Disordered" evidence="3">
    <location>
        <begin position="533"/>
        <end position="605"/>
    </location>
</feature>
<feature type="region of interest" description="Disordered" evidence="3">
    <location>
        <begin position="710"/>
        <end position="736"/>
    </location>
</feature>
<feature type="region of interest" description="Disordered" evidence="3">
    <location>
        <begin position="748"/>
        <end position="768"/>
    </location>
</feature>
<feature type="region of interest" description="Disordered" evidence="3">
    <location>
        <begin position="791"/>
        <end position="1135"/>
    </location>
</feature>
<feature type="region of interest" description="Disordered" evidence="3">
    <location>
        <begin position="1160"/>
        <end position="1211"/>
    </location>
</feature>
<feature type="region of interest" description="Disordered" evidence="3">
    <location>
        <begin position="1251"/>
        <end position="1285"/>
    </location>
</feature>
<feature type="region of interest" description="Disordered" evidence="3">
    <location>
        <begin position="1393"/>
        <end position="1418"/>
    </location>
</feature>
<feature type="region of interest" description="Disordered" evidence="3">
    <location>
        <begin position="1450"/>
        <end position="1531"/>
    </location>
</feature>
<feature type="compositionally biased region" description="Low complexity" evidence="3">
    <location>
        <begin position="112"/>
        <end position="147"/>
    </location>
</feature>
<feature type="compositionally biased region" description="Low complexity" evidence="3">
    <location>
        <begin position="565"/>
        <end position="578"/>
    </location>
</feature>
<feature type="compositionally biased region" description="Low complexity" evidence="3">
    <location>
        <begin position="754"/>
        <end position="768"/>
    </location>
</feature>
<feature type="compositionally biased region" description="Low complexity" evidence="3">
    <location>
        <begin position="810"/>
        <end position="826"/>
    </location>
</feature>
<feature type="compositionally biased region" description="Polar residues" evidence="3">
    <location>
        <begin position="860"/>
        <end position="884"/>
    </location>
</feature>
<feature type="compositionally biased region" description="Low complexity" evidence="3">
    <location>
        <begin position="945"/>
        <end position="959"/>
    </location>
</feature>
<feature type="compositionally biased region" description="Basic residues" evidence="3">
    <location>
        <begin position="966"/>
        <end position="975"/>
    </location>
</feature>
<feature type="compositionally biased region" description="Gly residues" evidence="3">
    <location>
        <begin position="983"/>
        <end position="1004"/>
    </location>
</feature>
<feature type="compositionally biased region" description="Low complexity" evidence="3">
    <location>
        <begin position="1031"/>
        <end position="1045"/>
    </location>
</feature>
<feature type="compositionally biased region" description="Polar residues" evidence="3">
    <location>
        <begin position="1068"/>
        <end position="1086"/>
    </location>
</feature>
<feature type="compositionally biased region" description="Low complexity" evidence="3">
    <location>
        <begin position="1087"/>
        <end position="1115"/>
    </location>
</feature>
<feature type="compositionally biased region" description="Gly residues" evidence="3">
    <location>
        <begin position="1164"/>
        <end position="1173"/>
    </location>
</feature>
<feature type="compositionally biased region" description="Polar residues" evidence="3">
    <location>
        <begin position="1183"/>
        <end position="1200"/>
    </location>
</feature>
<feature type="compositionally biased region" description="Basic and acidic residues" evidence="3">
    <location>
        <begin position="1270"/>
        <end position="1280"/>
    </location>
</feature>
<feature type="compositionally biased region" description="Polar residues" evidence="3">
    <location>
        <begin position="1467"/>
        <end position="1477"/>
    </location>
</feature>
<feature type="compositionally biased region" description="Polar residues" evidence="3">
    <location>
        <begin position="1502"/>
        <end position="1515"/>
    </location>
</feature>
<feature type="modified residue" description="Phosphoserine" evidence="5">
    <location>
        <position position="1123"/>
    </location>
</feature>
<feature type="modified residue" description="Phosphoserine" evidence="4 5">
    <location>
        <position position="1370"/>
    </location>
</feature>
<feature type="modified residue" description="Phosphoserine" evidence="5">
    <location>
        <position position="1413"/>
    </location>
</feature>
<feature type="splice variant" id="VSP_037217" description="In isoform A." evidence="8">
    <location>
        <begin position="1"/>
        <end position="10"/>
    </location>
</feature>
<feature type="sequence conflict" description="In Ref. 3; AAQ22587." evidence="9" ref="3">
    <original>Q</original>
    <variation>QQQH</variation>
    <location>
        <position position="120"/>
    </location>
</feature>
<feature type="sequence conflict" description="In Ref. 3; AAQ22587." evidence="9" ref="3">
    <original>L</original>
    <variation>I</variation>
    <location>
        <position position="1439"/>
    </location>
</feature>
<dbReference type="EMBL" id="AE014296">
    <property type="protein sequence ID" value="AAF47745.1"/>
    <property type="molecule type" value="Genomic_DNA"/>
</dbReference>
<dbReference type="EMBL" id="AE014296">
    <property type="protein sequence ID" value="AAG22237.2"/>
    <property type="molecule type" value="Genomic_DNA"/>
</dbReference>
<dbReference type="EMBL" id="AE014296">
    <property type="protein sequence ID" value="AAS64955.2"/>
    <property type="molecule type" value="Genomic_DNA"/>
</dbReference>
<dbReference type="EMBL" id="BT010118">
    <property type="protein sequence ID" value="AAQ22587.1"/>
    <property type="status" value="ALT_SEQ"/>
    <property type="molecule type" value="mRNA"/>
</dbReference>
<dbReference type="EMBL" id="BT150483">
    <property type="protein sequence ID" value="AKR06211.1"/>
    <property type="molecule type" value="mRNA"/>
</dbReference>
<dbReference type="RefSeq" id="NP_647793.1">
    <molecule id="Q9I7T7-1"/>
    <property type="nucleotide sequence ID" value="NM_139536.4"/>
</dbReference>
<dbReference type="RefSeq" id="NP_728843.1">
    <molecule id="Q9I7T7-2"/>
    <property type="nucleotide sequence ID" value="NM_168007.2"/>
</dbReference>
<dbReference type="RefSeq" id="NP_995985.2">
    <molecule id="Q9I7T7-2"/>
    <property type="nucleotide sequence ID" value="NM_206263.4"/>
</dbReference>
<dbReference type="SMR" id="Q9I7T7"/>
<dbReference type="BioGRID" id="63895">
    <property type="interactions" value="62"/>
</dbReference>
<dbReference type="FunCoup" id="Q9I7T7">
    <property type="interactions" value="176"/>
</dbReference>
<dbReference type="IntAct" id="Q9I7T7">
    <property type="interactions" value="63"/>
</dbReference>
<dbReference type="STRING" id="7227.FBpp0072910"/>
<dbReference type="GlyGen" id="Q9I7T7">
    <property type="glycosylation" value="3 sites, 1 O-linked glycan (1 site)"/>
</dbReference>
<dbReference type="iPTMnet" id="Q9I7T7"/>
<dbReference type="PaxDb" id="7227-FBpp0072910"/>
<dbReference type="EnsemblMetazoa" id="FBtr0073045">
    <molecule id="Q9I7T7-2"/>
    <property type="protein sequence ID" value="FBpp0072909"/>
    <property type="gene ID" value="FBgn0035424"/>
</dbReference>
<dbReference type="EnsemblMetazoa" id="FBtr0073046">
    <molecule id="Q9I7T7-1"/>
    <property type="protein sequence ID" value="FBpp0072910"/>
    <property type="gene ID" value="FBgn0035424"/>
</dbReference>
<dbReference type="EnsemblMetazoa" id="FBtr0308061">
    <molecule id="Q9I7T7-2"/>
    <property type="protein sequence ID" value="FBpp0300406"/>
    <property type="gene ID" value="FBgn0035424"/>
</dbReference>
<dbReference type="GeneID" id="38399"/>
<dbReference type="KEGG" id="dme:Dmel_CG11505"/>
<dbReference type="UCSC" id="CG11505-RA">
    <property type="organism name" value="d. melanogaster"/>
</dbReference>
<dbReference type="UCSC" id="CG11505-RB">
    <molecule id="Q9I7T7-1"/>
    <property type="organism name" value="d. melanogaster"/>
</dbReference>
<dbReference type="UCSC" id="CG11505-RC">
    <property type="organism name" value="d. melanogaster"/>
</dbReference>
<dbReference type="AGR" id="FB:FBgn0035424"/>
<dbReference type="CTD" id="23185"/>
<dbReference type="FlyBase" id="FBgn0035424">
    <property type="gene designation" value="Larp4B"/>
</dbReference>
<dbReference type="VEuPathDB" id="VectorBase:FBgn0035424"/>
<dbReference type="eggNOG" id="KOG2591">
    <property type="taxonomic scope" value="Eukaryota"/>
</dbReference>
<dbReference type="GeneTree" id="ENSGT00940000172042"/>
<dbReference type="HOGENOM" id="CLU_247266_0_0_1"/>
<dbReference type="InParanoid" id="Q9I7T7"/>
<dbReference type="OMA" id="GHNEYSA"/>
<dbReference type="OrthoDB" id="10046764at2759"/>
<dbReference type="PhylomeDB" id="Q9I7T7"/>
<dbReference type="SignaLink" id="Q9I7T7"/>
<dbReference type="BioGRID-ORCS" id="38399">
    <property type="hits" value="1 hit in 3 CRISPR screens"/>
</dbReference>
<dbReference type="ChiTaRS" id="CG11505">
    <property type="organism name" value="fly"/>
</dbReference>
<dbReference type="GenomeRNAi" id="38399"/>
<dbReference type="PRO" id="PR:Q9I7T7"/>
<dbReference type="Proteomes" id="UP000000803">
    <property type="component" value="Chromosome 3L"/>
</dbReference>
<dbReference type="Bgee" id="FBgn0035424">
    <property type="expression patterns" value="Expressed in spermatocyte in testis and 280 other cell types or tissues"/>
</dbReference>
<dbReference type="ExpressionAtlas" id="Q9I7T7">
    <property type="expression patterns" value="baseline and differential"/>
</dbReference>
<dbReference type="GO" id="GO:0010494">
    <property type="term" value="C:cytoplasmic stress granule"/>
    <property type="evidence" value="ECO:0000318"/>
    <property type="project" value="GO_Central"/>
</dbReference>
<dbReference type="GO" id="GO:0005829">
    <property type="term" value="C:cytosol"/>
    <property type="evidence" value="ECO:0000250"/>
    <property type="project" value="FlyBase"/>
</dbReference>
<dbReference type="GO" id="GO:0003730">
    <property type="term" value="F:mRNA 3'-UTR binding"/>
    <property type="evidence" value="ECO:0000250"/>
    <property type="project" value="FlyBase"/>
</dbReference>
<dbReference type="GO" id="GO:0030308">
    <property type="term" value="P:negative regulation of cell growth"/>
    <property type="evidence" value="ECO:0000315"/>
    <property type="project" value="FlyBase"/>
</dbReference>
<dbReference type="GO" id="GO:0017148">
    <property type="term" value="P:negative regulation of translation"/>
    <property type="evidence" value="ECO:0000315"/>
    <property type="project" value="FlyBase"/>
</dbReference>
<dbReference type="GO" id="GO:0045727">
    <property type="term" value="P:positive regulation of translation"/>
    <property type="evidence" value="ECO:0000318"/>
    <property type="project" value="GO_Central"/>
</dbReference>
<dbReference type="CDD" id="cd08031">
    <property type="entry name" value="LARP_4_5_like"/>
    <property type="match status" value="1"/>
</dbReference>
<dbReference type="CDD" id="cd12430">
    <property type="entry name" value="RRM_LARP4_5_like"/>
    <property type="match status" value="1"/>
</dbReference>
<dbReference type="Gene3D" id="1.10.10.10">
    <property type="entry name" value="Winged helix-like DNA-binding domain superfamily/Winged helix DNA-binding domain"/>
    <property type="match status" value="1"/>
</dbReference>
<dbReference type="InterPro" id="IPR045180">
    <property type="entry name" value="La_dom_prot"/>
</dbReference>
<dbReference type="InterPro" id="IPR006630">
    <property type="entry name" value="La_HTH"/>
</dbReference>
<dbReference type="InterPro" id="IPR035979">
    <property type="entry name" value="RBD_domain_sf"/>
</dbReference>
<dbReference type="InterPro" id="IPR036388">
    <property type="entry name" value="WH-like_DNA-bd_sf"/>
</dbReference>
<dbReference type="InterPro" id="IPR036390">
    <property type="entry name" value="WH_DNA-bd_sf"/>
</dbReference>
<dbReference type="PANTHER" id="PTHR22792:SF131">
    <property type="entry name" value="LA-RELATED PROTEIN LARP4B"/>
    <property type="match status" value="1"/>
</dbReference>
<dbReference type="PANTHER" id="PTHR22792">
    <property type="entry name" value="LUPUS LA PROTEIN-RELATED"/>
    <property type="match status" value="1"/>
</dbReference>
<dbReference type="Pfam" id="PF05383">
    <property type="entry name" value="La"/>
    <property type="match status" value="1"/>
</dbReference>
<dbReference type="SMART" id="SM00715">
    <property type="entry name" value="LA"/>
    <property type="match status" value="1"/>
</dbReference>
<dbReference type="SUPFAM" id="SSF54928">
    <property type="entry name" value="RNA-binding domain, RBD"/>
    <property type="match status" value="1"/>
</dbReference>
<dbReference type="SUPFAM" id="SSF46785">
    <property type="entry name" value="Winged helix' DNA-binding domain"/>
    <property type="match status" value="1"/>
</dbReference>
<dbReference type="PROSITE" id="PS50961">
    <property type="entry name" value="HTH_LA"/>
    <property type="match status" value="1"/>
</dbReference>
<comment type="function">
    <text evidence="6">Probable RNA binding protein. Negatively regulates myc at the protein level, via an unknown mechanism, and may therefore have a role in growth. Has no effect on myc mRNA levels.</text>
</comment>
<comment type="alternative products">
    <event type="alternative splicing"/>
    <isoform>
        <id>Q9I7T7-1</id>
        <name>B</name>
        <sequence type="displayed"/>
    </isoform>
    <isoform>
        <id>Q9I7T7-2</id>
        <name>A</name>
        <name>D</name>
        <sequence type="described" ref="VSP_037217"/>
    </isoform>
</comment>
<comment type="developmental stage">
    <text evidence="6">Expressed throughout development and in adults. Ubiquitously expressed in the central nervous system and imaginal disks.</text>
</comment>
<comment type="domain">
    <text evidence="6">The HTH La-type RNA-binding and RRM domains are required for its function in negatively regulating organ and cell size.</text>
</comment>
<comment type="sequence caution" evidence="9">
    <conflict type="miscellaneous discrepancy">
        <sequence resource="EMBL-CDS" id="AAQ22587"/>
    </conflict>
    <text>Probable cloning artifact.</text>
</comment>
<sequence>MEYFLGGYVYMNGDALKIQPPVYTNVPVETAMLATNLFGATTQIAASPAAAAAAHIPLITAAAAAAAAAGAPAVAPPVAVAPVATASAAQAAVVPAQQQQQAHPHQAQILAHTHVAHQQQQQQQQQTIQQHLHQQQQQQSPHPAQHLTYGHQPALSQATAGGSGTISGGAVGPSGVVVEGQDTNEYAIMNGALGQTQDGTVVCYTTDALNNTNLVALDPQPHQIVVPVQVPVQVPVPVQLPANGSADPQQGSHNAAGGEEPNIPLDKLKQMLATQLEYYFSRENLANDTYLLSQMDSDQYVPIYTVARFNLVRKLTNDINLITEVLRESPNVQVDDKGLRVRPNRKRCIIILREISNNTPLDDVKALFSNESCPRPISCEFAANNSWYITFESDEDAQKAYKYLREEVKEFQGKPIMARIKPKSFINRIQAVPKNGYRLTSPPTANVFDPAGAGGATVSYAAAQQPRYLYTNGAAIAAPASVQYSNPVLIPIPQNQFYPGLVAGPWPPGTVAATTAHGQNFYELGGNIFTTNPLPPQPVTAGFAQAPPPTSQAMVTPKPQGGGRYNNNHRGNPNNVGGANSGPRAESRSKPPRSTPSASHIQGGNIMPIQITAPIPGGMVSVVPTNIVQDPLQPAPLQQQPQQVIQQIQQQPSSSAQQQQAATVQMNNTTRHYPIKSNWKGGMQKNLDKSYSGGVATHHHYTTQVQALPAHSHHLQAQQQLQGQTQQQHYQLASSSAASAPQVTYVTTAPAPQQPGQHQHHLVVQQTQPQQQQQQQQVVLQQQQVQVQELQEAGDGVEHSSHAMQQVNRSSNMSASSSSSLATSMSKEPLQWQNRPRRRRRDEEGGINYSPGGRVGLYGSSPSNPHPQQHLMSSSTGSNVQSAGGTDGGGASHRGGERQSHYNTIHDVPPPQHRGNYKGNNYNPHYHAQHSSMASGSHHHHHHNALSSQQQQHHLTTGTGQQGSGHHYHHHHHHNSIGSNVGNSGGLGVSSGGSGGGGSGGGSGSNSLSGGSNERGIHHSSLGYQGHQHQHQQQQQQQQQQQQQQPAAPVQPPQFDLEDAAFPPLPATSATAPHTPQATGGASLHNSTTSSSSSTGLGQKQTLHQQQQQAPQQHQVLSSSVESAGGDEQRSSNQQGIETSNIHLANSSTANNWVENRLSDVVRTGGGGGGGGKGKARKDNRHPQGQNQPHMAPNYQQHQPRNPPVSPTPALGAEYGIQIQEGNNTKNVTKQSSSNNNSIHVIKCQTPNINASSKEEAAGAQQQQQQQLDKSNKTEDEMHPKQPSQQRLVEGYVQQQQLPLLAAHNEYSAALAAGAGACSVVEGGLTTSLAECSLGQHKKPPSVAALHAKKDANLLEKGASKHKSVATSTSTENLSAAATASKLSYAQVAQHHKAAASSDSKETGSGGSTGTLSPTGSHKMDLVFGDPAVVVAAVEKSGLATVSTEKRVAGGASPAALIGKPAGGLPATNTTQGSSAVVVSAKEKDNRPNASVRPLSKEKQQQHYGSATEHNTNANIGLGASGNRKSRANNS</sequence>
<reference key="1">
    <citation type="journal article" date="2000" name="Science">
        <title>The genome sequence of Drosophila melanogaster.</title>
        <authorList>
            <person name="Adams M.D."/>
            <person name="Celniker S.E."/>
            <person name="Holt R.A."/>
            <person name="Evans C.A."/>
            <person name="Gocayne J.D."/>
            <person name="Amanatides P.G."/>
            <person name="Scherer S.E."/>
            <person name="Li P.W."/>
            <person name="Hoskins R.A."/>
            <person name="Galle R.F."/>
            <person name="George R.A."/>
            <person name="Lewis S.E."/>
            <person name="Richards S."/>
            <person name="Ashburner M."/>
            <person name="Henderson S.N."/>
            <person name="Sutton G.G."/>
            <person name="Wortman J.R."/>
            <person name="Yandell M.D."/>
            <person name="Zhang Q."/>
            <person name="Chen L.X."/>
            <person name="Brandon R.C."/>
            <person name="Rogers Y.-H.C."/>
            <person name="Blazej R.G."/>
            <person name="Champe M."/>
            <person name="Pfeiffer B.D."/>
            <person name="Wan K.H."/>
            <person name="Doyle C."/>
            <person name="Baxter E.G."/>
            <person name="Helt G."/>
            <person name="Nelson C.R."/>
            <person name="Miklos G.L.G."/>
            <person name="Abril J.F."/>
            <person name="Agbayani A."/>
            <person name="An H.-J."/>
            <person name="Andrews-Pfannkoch C."/>
            <person name="Baldwin D."/>
            <person name="Ballew R.M."/>
            <person name="Basu A."/>
            <person name="Baxendale J."/>
            <person name="Bayraktaroglu L."/>
            <person name="Beasley E.M."/>
            <person name="Beeson K.Y."/>
            <person name="Benos P.V."/>
            <person name="Berman B.P."/>
            <person name="Bhandari D."/>
            <person name="Bolshakov S."/>
            <person name="Borkova D."/>
            <person name="Botchan M.R."/>
            <person name="Bouck J."/>
            <person name="Brokstein P."/>
            <person name="Brottier P."/>
            <person name="Burtis K.C."/>
            <person name="Busam D.A."/>
            <person name="Butler H."/>
            <person name="Cadieu E."/>
            <person name="Center A."/>
            <person name="Chandra I."/>
            <person name="Cherry J.M."/>
            <person name="Cawley S."/>
            <person name="Dahlke C."/>
            <person name="Davenport L.B."/>
            <person name="Davies P."/>
            <person name="de Pablos B."/>
            <person name="Delcher A."/>
            <person name="Deng Z."/>
            <person name="Mays A.D."/>
            <person name="Dew I."/>
            <person name="Dietz S.M."/>
            <person name="Dodson K."/>
            <person name="Doup L.E."/>
            <person name="Downes M."/>
            <person name="Dugan-Rocha S."/>
            <person name="Dunkov B.C."/>
            <person name="Dunn P."/>
            <person name="Durbin K.J."/>
            <person name="Evangelista C.C."/>
            <person name="Ferraz C."/>
            <person name="Ferriera S."/>
            <person name="Fleischmann W."/>
            <person name="Fosler C."/>
            <person name="Gabrielian A.E."/>
            <person name="Garg N.S."/>
            <person name="Gelbart W.M."/>
            <person name="Glasser K."/>
            <person name="Glodek A."/>
            <person name="Gong F."/>
            <person name="Gorrell J.H."/>
            <person name="Gu Z."/>
            <person name="Guan P."/>
            <person name="Harris M."/>
            <person name="Harris N.L."/>
            <person name="Harvey D.A."/>
            <person name="Heiman T.J."/>
            <person name="Hernandez J.R."/>
            <person name="Houck J."/>
            <person name="Hostin D."/>
            <person name="Houston K.A."/>
            <person name="Howland T.J."/>
            <person name="Wei M.-H."/>
            <person name="Ibegwam C."/>
            <person name="Jalali M."/>
            <person name="Kalush F."/>
            <person name="Karpen G.H."/>
            <person name="Ke Z."/>
            <person name="Kennison J.A."/>
            <person name="Ketchum K.A."/>
            <person name="Kimmel B.E."/>
            <person name="Kodira C.D."/>
            <person name="Kraft C.L."/>
            <person name="Kravitz S."/>
            <person name="Kulp D."/>
            <person name="Lai Z."/>
            <person name="Lasko P."/>
            <person name="Lei Y."/>
            <person name="Levitsky A.A."/>
            <person name="Li J.H."/>
            <person name="Li Z."/>
            <person name="Liang Y."/>
            <person name="Lin X."/>
            <person name="Liu X."/>
            <person name="Mattei B."/>
            <person name="McIntosh T.C."/>
            <person name="McLeod M.P."/>
            <person name="McPherson D."/>
            <person name="Merkulov G."/>
            <person name="Milshina N.V."/>
            <person name="Mobarry C."/>
            <person name="Morris J."/>
            <person name="Moshrefi A."/>
            <person name="Mount S.M."/>
            <person name="Moy M."/>
            <person name="Murphy B."/>
            <person name="Murphy L."/>
            <person name="Muzny D.M."/>
            <person name="Nelson D.L."/>
            <person name="Nelson D.R."/>
            <person name="Nelson K.A."/>
            <person name="Nixon K."/>
            <person name="Nusskern D.R."/>
            <person name="Pacleb J.M."/>
            <person name="Palazzolo M."/>
            <person name="Pittman G.S."/>
            <person name="Pan S."/>
            <person name="Pollard J."/>
            <person name="Puri V."/>
            <person name="Reese M.G."/>
            <person name="Reinert K."/>
            <person name="Remington K."/>
            <person name="Saunders R.D.C."/>
            <person name="Scheeler F."/>
            <person name="Shen H."/>
            <person name="Shue B.C."/>
            <person name="Siden-Kiamos I."/>
            <person name="Simpson M."/>
            <person name="Skupski M.P."/>
            <person name="Smith T.J."/>
            <person name="Spier E."/>
            <person name="Spradling A.C."/>
            <person name="Stapleton M."/>
            <person name="Strong R."/>
            <person name="Sun E."/>
            <person name="Svirskas R."/>
            <person name="Tector C."/>
            <person name="Turner R."/>
            <person name="Venter E."/>
            <person name="Wang A.H."/>
            <person name="Wang X."/>
            <person name="Wang Z.-Y."/>
            <person name="Wassarman D.A."/>
            <person name="Weinstock G.M."/>
            <person name="Weissenbach J."/>
            <person name="Williams S.M."/>
            <person name="Woodage T."/>
            <person name="Worley K.C."/>
            <person name="Wu D."/>
            <person name="Yang S."/>
            <person name="Yao Q.A."/>
            <person name="Ye J."/>
            <person name="Yeh R.-F."/>
            <person name="Zaveri J.S."/>
            <person name="Zhan M."/>
            <person name="Zhang G."/>
            <person name="Zhao Q."/>
            <person name="Zheng L."/>
            <person name="Zheng X.H."/>
            <person name="Zhong F.N."/>
            <person name="Zhong W."/>
            <person name="Zhou X."/>
            <person name="Zhu S.C."/>
            <person name="Zhu X."/>
            <person name="Smith H.O."/>
            <person name="Gibbs R.A."/>
            <person name="Myers E.W."/>
            <person name="Rubin G.M."/>
            <person name="Venter J.C."/>
        </authorList>
    </citation>
    <scope>NUCLEOTIDE SEQUENCE [LARGE SCALE GENOMIC DNA]</scope>
    <source>
        <strain>Berkeley</strain>
    </source>
</reference>
<reference key="2">
    <citation type="journal article" date="2002" name="Genome Biol.">
        <title>Annotation of the Drosophila melanogaster euchromatic genome: a systematic review.</title>
        <authorList>
            <person name="Misra S."/>
            <person name="Crosby M.A."/>
            <person name="Mungall C.J."/>
            <person name="Matthews B.B."/>
            <person name="Campbell K.S."/>
            <person name="Hradecky P."/>
            <person name="Huang Y."/>
            <person name="Kaminker J.S."/>
            <person name="Millburn G.H."/>
            <person name="Prochnik S.E."/>
            <person name="Smith C.D."/>
            <person name="Tupy J.L."/>
            <person name="Whitfield E.J."/>
            <person name="Bayraktaroglu L."/>
            <person name="Berman B.P."/>
            <person name="Bettencourt B.R."/>
            <person name="Celniker S.E."/>
            <person name="de Grey A.D.N.J."/>
            <person name="Drysdale R.A."/>
            <person name="Harris N.L."/>
            <person name="Richter J."/>
            <person name="Russo S."/>
            <person name="Schroeder A.J."/>
            <person name="Shu S.Q."/>
            <person name="Stapleton M."/>
            <person name="Yamada C."/>
            <person name="Ashburner M."/>
            <person name="Gelbart W.M."/>
            <person name="Rubin G.M."/>
            <person name="Lewis S.E."/>
        </authorList>
    </citation>
    <scope>GENOME REANNOTATION</scope>
    <scope>ALTERNATIVE SPLICING</scope>
    <source>
        <strain>Berkeley</strain>
    </source>
</reference>
<reference key="3">
    <citation type="submission" date="2015-07" db="EMBL/GenBank/DDBJ databases">
        <authorList>
            <person name="Stapleton M."/>
            <person name="Brokstein P."/>
            <person name="Hong L."/>
            <person name="Agbayani A."/>
            <person name="Carlson J.W."/>
            <person name="Champe M."/>
            <person name="Chavez C."/>
            <person name="Dorsett V."/>
            <person name="Dresnek D."/>
            <person name="Farfan D."/>
            <person name="Frise E."/>
            <person name="George R.A."/>
            <person name="Gonzalez M."/>
            <person name="Guarin H."/>
            <person name="Kronmiller B."/>
            <person name="Li P.W."/>
            <person name="Liao G."/>
            <person name="Miranda A."/>
            <person name="Mungall C.J."/>
            <person name="Nunoo J."/>
            <person name="Pacleb J.M."/>
            <person name="Paragas V."/>
            <person name="Park S."/>
            <person name="Patel S."/>
            <person name="Phouanenavong S."/>
            <person name="Wan K.H."/>
            <person name="Yu C."/>
            <person name="Lewis S.E."/>
            <person name="Rubin G.M."/>
            <person name="Celniker S.E."/>
            <person name="Booth B."/>
        </authorList>
    </citation>
    <scope>NUCLEOTIDE SEQUENCE [LARGE SCALE MRNA] (ISOFORM A)</scope>
    <source>
        <strain>Berkeley</strain>
        <tissue>Testis</tissue>
    </source>
</reference>
<reference key="4">
    <citation type="journal article" date="2008" name="J. Proteome Res.">
        <title>Phosphoproteome analysis of Drosophila melanogaster embryos.</title>
        <authorList>
            <person name="Zhai B."/>
            <person name="Villen J."/>
            <person name="Beausoleil S.A."/>
            <person name="Mintseris J."/>
            <person name="Gygi S.P."/>
        </authorList>
    </citation>
    <scope>PHOSPHORYLATION [LARGE SCALE ANALYSIS] AT SER-1123; SER-1370 AND SER-1413</scope>
    <scope>IDENTIFICATION BY MASS SPECTROMETRY</scope>
    <source>
        <tissue>Embryo</tissue>
    </source>
</reference>
<reference key="5">
    <citation type="journal article" date="2007" name="Mol. Biosyst.">
        <title>An integrated chemical, mass spectrometric and computational strategy for (quantitative) phosphoproteomics: application to Drosophila melanogaster Kc167 cells.</title>
        <authorList>
            <person name="Bodenmiller B."/>
            <person name="Mueller L.N."/>
            <person name="Pedrioli P.G.A."/>
            <person name="Pflieger D."/>
            <person name="Juenger M.A."/>
            <person name="Eng J.K."/>
            <person name="Aebersold R."/>
            <person name="Tao W.A."/>
        </authorList>
    </citation>
    <scope>PHOSPHORYLATION [LARGE SCALE ANALYSIS] AT SER-1370</scope>
    <scope>IDENTIFICATION BY MASS SPECTROMETRY</scope>
</reference>
<reference key="6">
    <citation type="journal article" date="2018" name="Biochem. Biophys. Res. Commun.">
        <title>Overexpression of Larp4B downregulates dMyc and reduces cell and organ sizes in Drosophila.</title>
        <authorList>
            <person name="Funakoshi M."/>
            <person name="Tsuda M."/>
            <person name="Muramatsu K."/>
            <person name="Hatsuda H."/>
            <person name="Morishita S."/>
            <person name="Aigaki T."/>
        </authorList>
    </citation>
    <scope>FUNCTION</scope>
    <scope>DEVELOPMENTAL STAGE</scope>
    <scope>DOMAIN</scope>
</reference>
<keyword id="KW-0025">Alternative splicing</keyword>
<keyword id="KW-0597">Phosphoprotein</keyword>
<keyword id="KW-1185">Reference proteome</keyword>
<keyword id="KW-0694">RNA-binding</keyword>
<organism>
    <name type="scientific">Drosophila melanogaster</name>
    <name type="common">Fruit fly</name>
    <dbReference type="NCBI Taxonomy" id="7227"/>
    <lineage>
        <taxon>Eukaryota</taxon>
        <taxon>Metazoa</taxon>
        <taxon>Ecdysozoa</taxon>
        <taxon>Arthropoda</taxon>
        <taxon>Hexapoda</taxon>
        <taxon>Insecta</taxon>
        <taxon>Pterygota</taxon>
        <taxon>Neoptera</taxon>
        <taxon>Endopterygota</taxon>
        <taxon>Diptera</taxon>
        <taxon>Brachycera</taxon>
        <taxon>Muscomorpha</taxon>
        <taxon>Ephydroidea</taxon>
        <taxon>Drosophilidae</taxon>
        <taxon>Drosophila</taxon>
        <taxon>Sophophora</taxon>
    </lineage>
</organism>
<accession>Q9I7T7</accession>
<accession>A0A0H4YFU3</accession>
<accession>Q7KV72</accession>
<accession>Q7YTX9</accession>
<accession>Q9VZS2</accession>
<evidence type="ECO:0000255" key="1">
    <source>
        <dbReference type="PROSITE-ProRule" id="PRU00176"/>
    </source>
</evidence>
<evidence type="ECO:0000255" key="2">
    <source>
        <dbReference type="PROSITE-ProRule" id="PRU00332"/>
    </source>
</evidence>
<evidence type="ECO:0000256" key="3">
    <source>
        <dbReference type="SAM" id="MobiDB-lite"/>
    </source>
</evidence>
<evidence type="ECO:0000269" key="4">
    <source>
    </source>
</evidence>
<evidence type="ECO:0000269" key="5">
    <source>
    </source>
</evidence>
<evidence type="ECO:0000269" key="6">
    <source>
    </source>
</evidence>
<evidence type="ECO:0000303" key="7">
    <source>
    </source>
</evidence>
<evidence type="ECO:0000303" key="8">
    <source ref="3"/>
</evidence>
<evidence type="ECO:0000305" key="9"/>
<evidence type="ECO:0000312" key="10">
    <source>
        <dbReference type="FlyBase" id="FBgn0035424"/>
    </source>
</evidence>
<protein>
    <recommendedName>
        <fullName evidence="7">La-related protein Larp4B</fullName>
    </recommendedName>
    <alternativeName>
        <fullName evidence="9">La ribonucleoprotein domain family member Larp4B</fullName>
    </alternativeName>
</protein>
<proteinExistence type="evidence at protein level"/>